<gene>
    <name type="primary">DDX39A</name>
    <name type="synonym">DDX39</name>
</gene>
<dbReference type="EC" id="3.6.4.13"/>
<dbReference type="EMBL" id="U90426">
    <property type="protein sequence ID" value="AAB50231.1"/>
    <property type="molecule type" value="mRNA"/>
</dbReference>
<dbReference type="EMBL" id="AB254849">
    <property type="protein sequence ID" value="BAG16272.1"/>
    <property type="molecule type" value="mRNA"/>
</dbReference>
<dbReference type="EMBL" id="AK026614">
    <property type="protein sequence ID" value="BAB15509.1"/>
    <property type="status" value="ALT_INIT"/>
    <property type="molecule type" value="mRNA"/>
</dbReference>
<dbReference type="EMBL" id="AC008569">
    <property type="status" value="NOT_ANNOTATED_CDS"/>
    <property type="molecule type" value="Genomic_DNA"/>
</dbReference>
<dbReference type="EMBL" id="CH471106">
    <property type="protein sequence ID" value="EAW84417.1"/>
    <property type="molecule type" value="Genomic_DNA"/>
</dbReference>
<dbReference type="EMBL" id="BC001009">
    <property type="protein sequence ID" value="AAH01009.1"/>
    <property type="molecule type" value="mRNA"/>
</dbReference>
<dbReference type="EMBL" id="BC032128">
    <property type="protein sequence ID" value="AAH32128.1"/>
    <property type="molecule type" value="mRNA"/>
</dbReference>
<dbReference type="CCDS" id="CCDS12308.1">
    <molecule id="O00148-1"/>
</dbReference>
<dbReference type="RefSeq" id="NP_005795.2">
    <molecule id="O00148-1"/>
    <property type="nucleotide sequence ID" value="NM_005804.3"/>
</dbReference>
<dbReference type="RefSeq" id="XP_011525922.1">
    <molecule id="O00148-1"/>
    <property type="nucleotide sequence ID" value="XM_011527620.2"/>
</dbReference>
<dbReference type="RefSeq" id="XP_054175470.1">
    <molecule id="O00148-1"/>
    <property type="nucleotide sequence ID" value="XM_054319495.1"/>
</dbReference>
<dbReference type="PDB" id="8IJU">
    <property type="method" value="X-ray"/>
    <property type="resolution" value="1.82 A"/>
    <property type="chains" value="A=42-427"/>
</dbReference>
<dbReference type="PDBsum" id="8IJU"/>
<dbReference type="SMR" id="O00148"/>
<dbReference type="BioGRID" id="115507">
    <property type="interactions" value="1132"/>
</dbReference>
<dbReference type="ComplexPortal" id="CPX-7261">
    <property type="entry name" value="TREX transcription-export complex, DX39A variant"/>
</dbReference>
<dbReference type="CORUM" id="O00148"/>
<dbReference type="FunCoup" id="O00148">
    <property type="interactions" value="4318"/>
</dbReference>
<dbReference type="IntAct" id="O00148">
    <property type="interactions" value="102"/>
</dbReference>
<dbReference type="MINT" id="O00148"/>
<dbReference type="STRING" id="9606.ENSP00000242776"/>
<dbReference type="BindingDB" id="O00148"/>
<dbReference type="ChEMBL" id="CHEMBL4105795"/>
<dbReference type="TCDB" id="3.A.22.1.2">
    <property type="family name" value="the transcription-coupled trex/tap nuclear mrna export complex (trex) family"/>
</dbReference>
<dbReference type="GlyGen" id="O00148">
    <property type="glycosylation" value="2 sites, 1 O-linked glycan (1 site)"/>
</dbReference>
<dbReference type="iPTMnet" id="O00148"/>
<dbReference type="PhosphoSitePlus" id="O00148"/>
<dbReference type="SwissPalm" id="O00148"/>
<dbReference type="BioMuta" id="DDX39A"/>
<dbReference type="jPOST" id="O00148"/>
<dbReference type="MassIVE" id="O00148"/>
<dbReference type="PaxDb" id="9606-ENSP00000242776"/>
<dbReference type="PeptideAtlas" id="O00148"/>
<dbReference type="ProteomicsDB" id="3400"/>
<dbReference type="ProteomicsDB" id="47735">
    <molecule id="O00148-1"/>
</dbReference>
<dbReference type="ProteomicsDB" id="72073"/>
<dbReference type="Pumba" id="O00148"/>
<dbReference type="Antibodypedia" id="13684">
    <property type="antibodies" value="136 antibodies from 26 providers"/>
</dbReference>
<dbReference type="DNASU" id="10212"/>
<dbReference type="Ensembl" id="ENST00000242776.9">
    <molecule id="O00148-1"/>
    <property type="protein sequence ID" value="ENSP00000242776.3"/>
    <property type="gene ID" value="ENSG00000123136.15"/>
</dbReference>
<dbReference type="Ensembl" id="ENST00000324340.13">
    <molecule id="O00148-2"/>
    <property type="protein sequence ID" value="ENSP00000322749.8"/>
    <property type="gene ID" value="ENSG00000123136.15"/>
</dbReference>
<dbReference type="Ensembl" id="ENST00000454233.6">
    <molecule id="O00148-3"/>
    <property type="protein sequence ID" value="ENSP00000392929.2"/>
    <property type="gene ID" value="ENSG00000123136.15"/>
</dbReference>
<dbReference type="Ensembl" id="ENST00000588692.5">
    <molecule id="O00148-3"/>
    <property type="protein sequence ID" value="ENSP00000467862.1"/>
    <property type="gene ID" value="ENSG00000123136.15"/>
</dbReference>
<dbReference type="GeneID" id="10212"/>
<dbReference type="KEGG" id="hsa:10212"/>
<dbReference type="MANE-Select" id="ENST00000242776.9">
    <property type="protein sequence ID" value="ENSP00000242776.3"/>
    <property type="RefSeq nucleotide sequence ID" value="NM_005804.4"/>
    <property type="RefSeq protein sequence ID" value="NP_005795.2"/>
</dbReference>
<dbReference type="UCSC" id="uc002myo.4">
    <molecule id="O00148-1"/>
    <property type="organism name" value="human"/>
</dbReference>
<dbReference type="UCSC" id="uc010dzm.2">
    <property type="organism name" value="human"/>
</dbReference>
<dbReference type="AGR" id="HGNC:17821"/>
<dbReference type="CTD" id="10212"/>
<dbReference type="DisGeNET" id="10212"/>
<dbReference type="GeneCards" id="DDX39A"/>
<dbReference type="HGNC" id="HGNC:17821">
    <property type="gene designation" value="DDX39A"/>
</dbReference>
<dbReference type="HPA" id="ENSG00000123136">
    <property type="expression patterns" value="Tissue enhanced (testis)"/>
</dbReference>
<dbReference type="MIM" id="619906">
    <property type="type" value="gene"/>
</dbReference>
<dbReference type="neXtProt" id="NX_O00148"/>
<dbReference type="OpenTargets" id="ENSG00000123136"/>
<dbReference type="PharmGKB" id="PA27226"/>
<dbReference type="VEuPathDB" id="HostDB:ENSG00000123136"/>
<dbReference type="eggNOG" id="KOG0329">
    <property type="taxonomic scope" value="Eukaryota"/>
</dbReference>
<dbReference type="GeneTree" id="ENSGT00940000154912"/>
<dbReference type="HOGENOM" id="CLU_003041_1_0_1"/>
<dbReference type="InParanoid" id="O00148"/>
<dbReference type="OMA" id="EHETTQE"/>
<dbReference type="OrthoDB" id="196131at2759"/>
<dbReference type="PAN-GO" id="O00148">
    <property type="GO annotations" value="4 GO annotations based on evolutionary models"/>
</dbReference>
<dbReference type="PhylomeDB" id="O00148"/>
<dbReference type="TreeFam" id="TF300442"/>
<dbReference type="PathwayCommons" id="O00148"/>
<dbReference type="Reactome" id="R-HSA-159236">
    <property type="pathway name" value="Transport of Mature mRNA derived from an Intron-Containing Transcript"/>
</dbReference>
<dbReference type="Reactome" id="R-HSA-72187">
    <property type="pathway name" value="mRNA 3'-end processing"/>
</dbReference>
<dbReference type="Reactome" id="R-HSA-73856">
    <property type="pathway name" value="RNA Polymerase II Transcription Termination"/>
</dbReference>
<dbReference type="SignaLink" id="O00148"/>
<dbReference type="BioGRID-ORCS" id="10212">
    <property type="hits" value="44 hits in 1157 CRISPR screens"/>
</dbReference>
<dbReference type="CD-CODE" id="91857CE7">
    <property type="entry name" value="Nucleolus"/>
</dbReference>
<dbReference type="CD-CODE" id="DEE660B4">
    <property type="entry name" value="Stress granule"/>
</dbReference>
<dbReference type="ChiTaRS" id="DDX39A">
    <property type="organism name" value="human"/>
</dbReference>
<dbReference type="GeneWiki" id="DDX39"/>
<dbReference type="GenomeRNAi" id="10212"/>
<dbReference type="Pharos" id="O00148">
    <property type="development level" value="Tbio"/>
</dbReference>
<dbReference type="PRO" id="PR:O00148"/>
<dbReference type="Proteomes" id="UP000005640">
    <property type="component" value="Chromosome 19"/>
</dbReference>
<dbReference type="RNAct" id="O00148">
    <property type="molecule type" value="protein"/>
</dbReference>
<dbReference type="Bgee" id="ENSG00000123136">
    <property type="expression patterns" value="Expressed in left testis and 195 other cell types or tissues"/>
</dbReference>
<dbReference type="ExpressionAtlas" id="O00148">
    <property type="expression patterns" value="baseline and differential"/>
</dbReference>
<dbReference type="GO" id="GO:0005737">
    <property type="term" value="C:cytoplasm"/>
    <property type="evidence" value="ECO:0007669"/>
    <property type="project" value="UniProtKB-SubCell"/>
</dbReference>
<dbReference type="GO" id="GO:0016020">
    <property type="term" value="C:membrane"/>
    <property type="evidence" value="ECO:0007005"/>
    <property type="project" value="UniProtKB"/>
</dbReference>
<dbReference type="GO" id="GO:0016607">
    <property type="term" value="C:nuclear speck"/>
    <property type="evidence" value="ECO:0000314"/>
    <property type="project" value="HPA"/>
</dbReference>
<dbReference type="GO" id="GO:0005654">
    <property type="term" value="C:nucleoplasm"/>
    <property type="evidence" value="ECO:0000304"/>
    <property type="project" value="Reactome"/>
</dbReference>
<dbReference type="GO" id="GO:0005634">
    <property type="term" value="C:nucleus"/>
    <property type="evidence" value="ECO:0000314"/>
    <property type="project" value="UniProtKB"/>
</dbReference>
<dbReference type="GO" id="GO:0005524">
    <property type="term" value="F:ATP binding"/>
    <property type="evidence" value="ECO:0007669"/>
    <property type="project" value="UniProtKB-KW"/>
</dbReference>
<dbReference type="GO" id="GO:0016887">
    <property type="term" value="F:ATP hydrolysis activity"/>
    <property type="evidence" value="ECO:0000269"/>
    <property type="project" value="Reactome"/>
</dbReference>
<dbReference type="GO" id="GO:0042802">
    <property type="term" value="F:identical protein binding"/>
    <property type="evidence" value="ECO:0000353"/>
    <property type="project" value="IntAct"/>
</dbReference>
<dbReference type="GO" id="GO:0003729">
    <property type="term" value="F:mRNA binding"/>
    <property type="evidence" value="ECO:0000318"/>
    <property type="project" value="GO_Central"/>
</dbReference>
<dbReference type="GO" id="GO:0003723">
    <property type="term" value="F:RNA binding"/>
    <property type="evidence" value="ECO:0000314"/>
    <property type="project" value="UniProt"/>
</dbReference>
<dbReference type="GO" id="GO:0003724">
    <property type="term" value="F:RNA helicase activity"/>
    <property type="evidence" value="ECO:0000318"/>
    <property type="project" value="GO_Central"/>
</dbReference>
<dbReference type="GO" id="GO:0006406">
    <property type="term" value="P:mRNA export from nucleus"/>
    <property type="evidence" value="ECO:0000316"/>
    <property type="project" value="UniProtKB"/>
</dbReference>
<dbReference type="GO" id="GO:0000398">
    <property type="term" value="P:mRNA splicing, via spliceosome"/>
    <property type="evidence" value="ECO:0000316"/>
    <property type="project" value="UniProtKB"/>
</dbReference>
<dbReference type="GO" id="GO:0045824">
    <property type="term" value="P:negative regulation of innate immune response"/>
    <property type="evidence" value="ECO:0000314"/>
    <property type="project" value="UniProt"/>
</dbReference>
<dbReference type="GO" id="GO:0046832">
    <property type="term" value="P:negative regulation of RNA export from nucleus"/>
    <property type="evidence" value="ECO:0000314"/>
    <property type="project" value="UniProt"/>
</dbReference>
<dbReference type="GO" id="GO:0006405">
    <property type="term" value="P:RNA export from nucleus"/>
    <property type="evidence" value="ECO:0000304"/>
    <property type="project" value="Reactome"/>
</dbReference>
<dbReference type="CDD" id="cd17950">
    <property type="entry name" value="DEADc_DDX39"/>
    <property type="match status" value="1"/>
</dbReference>
<dbReference type="CDD" id="cd18787">
    <property type="entry name" value="SF2_C_DEAD"/>
    <property type="match status" value="1"/>
</dbReference>
<dbReference type="FunFam" id="3.40.50.300:FF:000111">
    <property type="entry name" value="DEAD-box ATP-dependent RNA helicase"/>
    <property type="match status" value="1"/>
</dbReference>
<dbReference type="FunFam" id="3.40.50.300:FF:000168">
    <property type="entry name" value="DEAD-box ATP-dependent RNA helicase 56-like"/>
    <property type="match status" value="1"/>
</dbReference>
<dbReference type="Gene3D" id="3.40.50.300">
    <property type="entry name" value="P-loop containing nucleotide triphosphate hydrolases"/>
    <property type="match status" value="2"/>
</dbReference>
<dbReference type="InterPro" id="IPR011545">
    <property type="entry name" value="DEAD/DEAH_box_helicase_dom"/>
</dbReference>
<dbReference type="InterPro" id="IPR014001">
    <property type="entry name" value="Helicase_ATP-bd"/>
</dbReference>
<dbReference type="InterPro" id="IPR001650">
    <property type="entry name" value="Helicase_C-like"/>
</dbReference>
<dbReference type="InterPro" id="IPR027417">
    <property type="entry name" value="P-loop_NTPase"/>
</dbReference>
<dbReference type="InterPro" id="IPR014014">
    <property type="entry name" value="RNA_helicase_DEAD_Q_motif"/>
</dbReference>
<dbReference type="PANTHER" id="PTHR47958">
    <property type="entry name" value="ATP-DEPENDENT RNA HELICASE DBP3"/>
    <property type="match status" value="1"/>
</dbReference>
<dbReference type="Pfam" id="PF00270">
    <property type="entry name" value="DEAD"/>
    <property type="match status" value="1"/>
</dbReference>
<dbReference type="Pfam" id="PF00271">
    <property type="entry name" value="Helicase_C"/>
    <property type="match status" value="1"/>
</dbReference>
<dbReference type="SMART" id="SM00487">
    <property type="entry name" value="DEXDc"/>
    <property type="match status" value="1"/>
</dbReference>
<dbReference type="SMART" id="SM00490">
    <property type="entry name" value="HELICc"/>
    <property type="match status" value="1"/>
</dbReference>
<dbReference type="SUPFAM" id="SSF52540">
    <property type="entry name" value="P-loop containing nucleoside triphosphate hydrolases"/>
    <property type="match status" value="1"/>
</dbReference>
<dbReference type="PROSITE" id="PS51192">
    <property type="entry name" value="HELICASE_ATP_BIND_1"/>
    <property type="match status" value="1"/>
</dbReference>
<dbReference type="PROSITE" id="PS51194">
    <property type="entry name" value="HELICASE_CTER"/>
    <property type="match status" value="1"/>
</dbReference>
<dbReference type="PROSITE" id="PS51195">
    <property type="entry name" value="Q_MOTIF"/>
    <property type="match status" value="1"/>
</dbReference>
<proteinExistence type="evidence at protein level"/>
<sequence length="427" mass="49130">MAEQDVENDLLDYDEEEEPQAPQESTPAPPKKDIKGSYVSIHSSGFRDFLLKPELLRAIVDCGFEHPSEVQHECIPQAILGMDVLCQAKSGMGKTAVFVLATLQQIEPVNGQVTVLVMCHTRELAFQISKEYERFSKYMPSVKVSVFFGGLSIKKDEEVLKKNCPHVVVGTPGRILALVRNRSFSLKNVKHFVLDECDKMLEQLDMRRDVQEIFRLTPHEKQCMMFSATLSKDIRPVCRKFMQDPMEVFVDDETKLTLHGLQQYYVKLKDSEKNRKLFDLLDVLEFNQVIIFVKSVQRCMALAQLLVEQNFPAIAIHRGMAQEERLSRYQQFKDFQRRILVATNLFGRGMDIERVNIVFNYDMPEDSDTYLHRVARAGRFGTKGLAITFVSDENDAKILNDVQDRFEVNVAELPEEIDISTYIEQSR</sequence>
<keyword id="KW-0002">3D-structure</keyword>
<keyword id="KW-0007">Acetylation</keyword>
<keyword id="KW-0025">Alternative splicing</keyword>
<keyword id="KW-0067">ATP-binding</keyword>
<keyword id="KW-0963">Cytoplasm</keyword>
<keyword id="KW-0347">Helicase</keyword>
<keyword id="KW-0378">Hydrolase</keyword>
<keyword id="KW-1017">Isopeptide bond</keyword>
<keyword id="KW-0507">mRNA processing</keyword>
<keyword id="KW-0508">mRNA splicing</keyword>
<keyword id="KW-0547">Nucleotide-binding</keyword>
<keyword id="KW-0539">Nucleus</keyword>
<keyword id="KW-0597">Phosphoprotein</keyword>
<keyword id="KW-1267">Proteomics identification</keyword>
<keyword id="KW-1185">Reference proteome</keyword>
<keyword id="KW-0694">RNA-binding</keyword>
<keyword id="KW-0832">Ubl conjugation</keyword>
<organism>
    <name type="scientific">Homo sapiens</name>
    <name type="common">Human</name>
    <dbReference type="NCBI Taxonomy" id="9606"/>
    <lineage>
        <taxon>Eukaryota</taxon>
        <taxon>Metazoa</taxon>
        <taxon>Chordata</taxon>
        <taxon>Craniata</taxon>
        <taxon>Vertebrata</taxon>
        <taxon>Euteleostomi</taxon>
        <taxon>Mammalia</taxon>
        <taxon>Eutheria</taxon>
        <taxon>Euarchontoglires</taxon>
        <taxon>Primates</taxon>
        <taxon>Haplorrhini</taxon>
        <taxon>Catarrhini</taxon>
        <taxon>Hominidae</taxon>
        <taxon>Homo</taxon>
    </lineage>
</organism>
<reference key="1">
    <citation type="submission" date="1997-02" db="EMBL/GenBank/DDBJ databases">
        <title>Human nuclear RNA helicase.</title>
        <authorList>
            <person name="Jelinek W.R."/>
        </authorList>
    </citation>
    <scope>NUCLEOTIDE SEQUENCE [MRNA] (ISOFORM 1)</scope>
</reference>
<reference key="2">
    <citation type="journal article" date="2007" name="Cancer Biol. Ther.">
        <title>DDX39, upregulated in lung squamous cell cancer, displays RNA helicase activities and promotes cancer cell growth.</title>
        <authorList>
            <person name="Sugiura T."/>
            <person name="Nagano Y."/>
            <person name="Noguchi Y."/>
        </authorList>
    </citation>
    <scope>NUCLEOTIDE SEQUENCE [MRNA] (ISOFORM 3)</scope>
    <scope>FUNCTION</scope>
    <scope>RNA-BINDING</scope>
    <scope>ALTERNATIVE SPLICING</scope>
</reference>
<reference key="3">
    <citation type="journal article" date="2004" name="Nat. Genet.">
        <title>Complete sequencing and characterization of 21,243 full-length human cDNAs.</title>
        <authorList>
            <person name="Ota T."/>
            <person name="Suzuki Y."/>
            <person name="Nishikawa T."/>
            <person name="Otsuki T."/>
            <person name="Sugiyama T."/>
            <person name="Irie R."/>
            <person name="Wakamatsu A."/>
            <person name="Hayashi K."/>
            <person name="Sato H."/>
            <person name="Nagai K."/>
            <person name="Kimura K."/>
            <person name="Makita H."/>
            <person name="Sekine M."/>
            <person name="Obayashi M."/>
            <person name="Nishi T."/>
            <person name="Shibahara T."/>
            <person name="Tanaka T."/>
            <person name="Ishii S."/>
            <person name="Yamamoto J."/>
            <person name="Saito K."/>
            <person name="Kawai Y."/>
            <person name="Isono Y."/>
            <person name="Nakamura Y."/>
            <person name="Nagahari K."/>
            <person name="Murakami K."/>
            <person name="Yasuda T."/>
            <person name="Iwayanagi T."/>
            <person name="Wagatsuma M."/>
            <person name="Shiratori A."/>
            <person name="Sudo H."/>
            <person name="Hosoiri T."/>
            <person name="Kaku Y."/>
            <person name="Kodaira H."/>
            <person name="Kondo H."/>
            <person name="Sugawara M."/>
            <person name="Takahashi M."/>
            <person name="Kanda K."/>
            <person name="Yokoi T."/>
            <person name="Furuya T."/>
            <person name="Kikkawa E."/>
            <person name="Omura Y."/>
            <person name="Abe K."/>
            <person name="Kamihara K."/>
            <person name="Katsuta N."/>
            <person name="Sato K."/>
            <person name="Tanikawa M."/>
            <person name="Yamazaki M."/>
            <person name="Ninomiya K."/>
            <person name="Ishibashi T."/>
            <person name="Yamashita H."/>
            <person name="Murakawa K."/>
            <person name="Fujimori K."/>
            <person name="Tanai H."/>
            <person name="Kimata M."/>
            <person name="Watanabe M."/>
            <person name="Hiraoka S."/>
            <person name="Chiba Y."/>
            <person name="Ishida S."/>
            <person name="Ono Y."/>
            <person name="Takiguchi S."/>
            <person name="Watanabe S."/>
            <person name="Yosida M."/>
            <person name="Hotuta T."/>
            <person name="Kusano J."/>
            <person name="Kanehori K."/>
            <person name="Takahashi-Fujii A."/>
            <person name="Hara H."/>
            <person name="Tanase T.-O."/>
            <person name="Nomura Y."/>
            <person name="Togiya S."/>
            <person name="Komai F."/>
            <person name="Hara R."/>
            <person name="Takeuchi K."/>
            <person name="Arita M."/>
            <person name="Imose N."/>
            <person name="Musashino K."/>
            <person name="Yuuki H."/>
            <person name="Oshima A."/>
            <person name="Sasaki N."/>
            <person name="Aotsuka S."/>
            <person name="Yoshikawa Y."/>
            <person name="Matsunawa H."/>
            <person name="Ichihara T."/>
            <person name="Shiohata N."/>
            <person name="Sano S."/>
            <person name="Moriya S."/>
            <person name="Momiyama H."/>
            <person name="Satoh N."/>
            <person name="Takami S."/>
            <person name="Terashima Y."/>
            <person name="Suzuki O."/>
            <person name="Nakagawa S."/>
            <person name="Senoh A."/>
            <person name="Mizoguchi H."/>
            <person name="Goto Y."/>
            <person name="Shimizu F."/>
            <person name="Wakebe H."/>
            <person name="Hishigaki H."/>
            <person name="Watanabe T."/>
            <person name="Sugiyama A."/>
            <person name="Takemoto M."/>
            <person name="Kawakami B."/>
            <person name="Yamazaki M."/>
            <person name="Watanabe K."/>
            <person name="Kumagai A."/>
            <person name="Itakura S."/>
            <person name="Fukuzumi Y."/>
            <person name="Fujimori Y."/>
            <person name="Komiyama M."/>
            <person name="Tashiro H."/>
            <person name="Tanigami A."/>
            <person name="Fujiwara T."/>
            <person name="Ono T."/>
            <person name="Yamada K."/>
            <person name="Fujii Y."/>
            <person name="Ozaki K."/>
            <person name="Hirao M."/>
            <person name="Ohmori Y."/>
            <person name="Kawabata A."/>
            <person name="Hikiji T."/>
            <person name="Kobatake N."/>
            <person name="Inagaki H."/>
            <person name="Ikema Y."/>
            <person name="Okamoto S."/>
            <person name="Okitani R."/>
            <person name="Kawakami T."/>
            <person name="Noguchi S."/>
            <person name="Itoh T."/>
            <person name="Shigeta K."/>
            <person name="Senba T."/>
            <person name="Matsumura K."/>
            <person name="Nakajima Y."/>
            <person name="Mizuno T."/>
            <person name="Morinaga M."/>
            <person name="Sasaki M."/>
            <person name="Togashi T."/>
            <person name="Oyama M."/>
            <person name="Hata H."/>
            <person name="Watanabe M."/>
            <person name="Komatsu T."/>
            <person name="Mizushima-Sugano J."/>
            <person name="Satoh T."/>
            <person name="Shirai Y."/>
            <person name="Takahashi Y."/>
            <person name="Nakagawa K."/>
            <person name="Okumura K."/>
            <person name="Nagase T."/>
            <person name="Nomura N."/>
            <person name="Kikuchi H."/>
            <person name="Masuho Y."/>
            <person name="Yamashita R."/>
            <person name="Nakai K."/>
            <person name="Yada T."/>
            <person name="Nakamura Y."/>
            <person name="Ohara O."/>
            <person name="Isogai T."/>
            <person name="Sugano S."/>
        </authorList>
    </citation>
    <scope>NUCLEOTIDE SEQUENCE [LARGE SCALE MRNA] (ISOFORM 1)</scope>
</reference>
<reference key="4">
    <citation type="journal article" date="2004" name="Nature">
        <title>The DNA sequence and biology of human chromosome 19.</title>
        <authorList>
            <person name="Grimwood J."/>
            <person name="Gordon L.A."/>
            <person name="Olsen A.S."/>
            <person name="Terry A."/>
            <person name="Schmutz J."/>
            <person name="Lamerdin J.E."/>
            <person name="Hellsten U."/>
            <person name="Goodstein D."/>
            <person name="Couronne O."/>
            <person name="Tran-Gyamfi M."/>
            <person name="Aerts A."/>
            <person name="Altherr M."/>
            <person name="Ashworth L."/>
            <person name="Bajorek E."/>
            <person name="Black S."/>
            <person name="Branscomb E."/>
            <person name="Caenepeel S."/>
            <person name="Carrano A.V."/>
            <person name="Caoile C."/>
            <person name="Chan Y.M."/>
            <person name="Christensen M."/>
            <person name="Cleland C.A."/>
            <person name="Copeland A."/>
            <person name="Dalin E."/>
            <person name="Dehal P."/>
            <person name="Denys M."/>
            <person name="Detter J.C."/>
            <person name="Escobar J."/>
            <person name="Flowers D."/>
            <person name="Fotopulos D."/>
            <person name="Garcia C."/>
            <person name="Georgescu A.M."/>
            <person name="Glavina T."/>
            <person name="Gomez M."/>
            <person name="Gonzales E."/>
            <person name="Groza M."/>
            <person name="Hammon N."/>
            <person name="Hawkins T."/>
            <person name="Haydu L."/>
            <person name="Ho I."/>
            <person name="Huang W."/>
            <person name="Israni S."/>
            <person name="Jett J."/>
            <person name="Kadner K."/>
            <person name="Kimball H."/>
            <person name="Kobayashi A."/>
            <person name="Larionov V."/>
            <person name="Leem S.-H."/>
            <person name="Lopez F."/>
            <person name="Lou Y."/>
            <person name="Lowry S."/>
            <person name="Malfatti S."/>
            <person name="Martinez D."/>
            <person name="McCready P.M."/>
            <person name="Medina C."/>
            <person name="Morgan J."/>
            <person name="Nelson K."/>
            <person name="Nolan M."/>
            <person name="Ovcharenko I."/>
            <person name="Pitluck S."/>
            <person name="Pollard M."/>
            <person name="Popkie A.P."/>
            <person name="Predki P."/>
            <person name="Quan G."/>
            <person name="Ramirez L."/>
            <person name="Rash S."/>
            <person name="Retterer J."/>
            <person name="Rodriguez A."/>
            <person name="Rogers S."/>
            <person name="Salamov A."/>
            <person name="Salazar A."/>
            <person name="She X."/>
            <person name="Smith D."/>
            <person name="Slezak T."/>
            <person name="Solovyev V."/>
            <person name="Thayer N."/>
            <person name="Tice H."/>
            <person name="Tsai M."/>
            <person name="Ustaszewska A."/>
            <person name="Vo N."/>
            <person name="Wagner M."/>
            <person name="Wheeler J."/>
            <person name="Wu K."/>
            <person name="Xie G."/>
            <person name="Yang J."/>
            <person name="Dubchak I."/>
            <person name="Furey T.S."/>
            <person name="DeJong P."/>
            <person name="Dickson M."/>
            <person name="Gordon D."/>
            <person name="Eichler E.E."/>
            <person name="Pennacchio L.A."/>
            <person name="Richardson P."/>
            <person name="Stubbs L."/>
            <person name="Rokhsar D.S."/>
            <person name="Myers R.M."/>
            <person name="Rubin E.M."/>
            <person name="Lucas S.M."/>
        </authorList>
    </citation>
    <scope>NUCLEOTIDE SEQUENCE [LARGE SCALE GENOMIC DNA]</scope>
</reference>
<reference key="5">
    <citation type="submission" date="2005-07" db="EMBL/GenBank/DDBJ databases">
        <authorList>
            <person name="Mural R.J."/>
            <person name="Istrail S."/>
            <person name="Sutton G."/>
            <person name="Florea L."/>
            <person name="Halpern A.L."/>
            <person name="Mobarry C.M."/>
            <person name="Lippert R."/>
            <person name="Walenz B."/>
            <person name="Shatkay H."/>
            <person name="Dew I."/>
            <person name="Miller J.R."/>
            <person name="Flanigan M.J."/>
            <person name="Edwards N.J."/>
            <person name="Bolanos R."/>
            <person name="Fasulo D."/>
            <person name="Halldorsson B.V."/>
            <person name="Hannenhalli S."/>
            <person name="Turner R."/>
            <person name="Yooseph S."/>
            <person name="Lu F."/>
            <person name="Nusskern D.R."/>
            <person name="Shue B.C."/>
            <person name="Zheng X.H."/>
            <person name="Zhong F."/>
            <person name="Delcher A.L."/>
            <person name="Huson D.H."/>
            <person name="Kravitz S.A."/>
            <person name="Mouchard L."/>
            <person name="Reinert K."/>
            <person name="Remington K.A."/>
            <person name="Clark A.G."/>
            <person name="Waterman M.S."/>
            <person name="Eichler E.E."/>
            <person name="Adams M.D."/>
            <person name="Hunkapiller M.W."/>
            <person name="Myers E.W."/>
            <person name="Venter J.C."/>
        </authorList>
    </citation>
    <scope>NUCLEOTIDE SEQUENCE [LARGE SCALE GENOMIC DNA]</scope>
</reference>
<reference key="6">
    <citation type="journal article" date="2004" name="Genome Res.">
        <title>The status, quality, and expansion of the NIH full-length cDNA project: the Mammalian Gene Collection (MGC).</title>
        <authorList>
            <consortium name="The MGC Project Team"/>
        </authorList>
    </citation>
    <scope>NUCLEOTIDE SEQUENCE [LARGE SCALE MRNA] (ISOFORMS 1 AND 2)</scope>
    <source>
        <tissue>Lung</tissue>
    </source>
</reference>
<reference key="7">
    <citation type="journal article" date="2004" name="Genomics">
        <title>Analysis of a high-throughput yeast two-hybrid system and its use to predict the function of intracellular proteins encoded within the human MHC class III region.</title>
        <authorList>
            <person name="Lehner B."/>
            <person name="Semple J.I."/>
            <person name="Brown S.E."/>
            <person name="Counsell D."/>
            <person name="Campbell R.D."/>
            <person name="Sanderson C.M."/>
        </authorList>
    </citation>
    <scope>INTERACTION WITH DDX39B</scope>
</reference>
<reference key="8">
    <citation type="journal article" date="2004" name="Nucleic Acids Res.">
        <title>Growth-regulated expression and G0-specific turnover of the mRNA that encodes URH49, a mammalian DExH/D box protein that is highly related to the mRNA export protein UAP56.</title>
        <authorList>
            <person name="Pryor A."/>
            <person name="Tung L."/>
            <person name="Yang Z."/>
            <person name="Kapadia F."/>
            <person name="Chang T.-H."/>
            <person name="Johnson L.F."/>
        </authorList>
    </citation>
    <scope>FUNCTION</scope>
    <scope>INTERACTION WITH ALYREF/THOC4</scope>
    <scope>INDUCTION</scope>
    <scope>TISSUE SPECIFICITY</scope>
</reference>
<reference key="9">
    <citation type="journal article" date="2006" name="Mol. Cell. Biol.">
        <title>The UL69 transactivator protein of human cytomegalovirus interacts with DEXD/H-Box RNA helicase UAP56 to promote cytoplasmic accumulation of unspliced RNA.</title>
        <authorList>
            <person name="Lischka P."/>
            <person name="Toth Z."/>
            <person name="Thomas M."/>
            <person name="Mueller R."/>
            <person name="Stamminger T."/>
        </authorList>
    </citation>
    <scope>INTERACTION WITH HHV-5 PROTEIN UL69 (MICROBIAL INFECTION)</scope>
</reference>
<reference key="10">
    <citation type="journal article" date="2007" name="Exp. Cell Res.">
        <title>Intracellular characterization of DDX39, a novel growth-associated RNA helicase.</title>
        <authorList>
            <person name="Sugiura T."/>
            <person name="Sakurai K."/>
            <person name="Nagano Y."/>
        </authorList>
    </citation>
    <scope>INTERACTION WITH SARNP</scope>
</reference>
<reference key="11">
    <citation type="journal article" date="2008" name="Proc. Natl. Acad. Sci. U.S.A.">
        <title>A quantitative atlas of mitotic phosphorylation.</title>
        <authorList>
            <person name="Dephoure N."/>
            <person name="Zhou C."/>
            <person name="Villen J."/>
            <person name="Beausoleil S.A."/>
            <person name="Bakalarski C.E."/>
            <person name="Elledge S.J."/>
            <person name="Gygi S.P."/>
        </authorList>
    </citation>
    <scope>IDENTIFICATION BY MASS SPECTROMETRY [LARGE SCALE ANALYSIS]</scope>
    <source>
        <tissue>Cervix carcinoma</tissue>
    </source>
</reference>
<reference key="12">
    <citation type="journal article" date="2009" name="Anal. Chem.">
        <title>Lys-N and trypsin cover complementary parts of the phosphoproteome in a refined SCX-based approach.</title>
        <authorList>
            <person name="Gauci S."/>
            <person name="Helbig A.O."/>
            <person name="Slijper M."/>
            <person name="Krijgsveld J."/>
            <person name="Heck A.J."/>
            <person name="Mohammed S."/>
        </authorList>
    </citation>
    <scope>ACETYLATION [LARGE SCALE ANALYSIS] AT ALA-2</scope>
    <scope>CLEAVAGE OF INITIATOR METHIONINE [LARGE SCALE ANALYSIS]</scope>
    <scope>IDENTIFICATION BY MASS SPECTROMETRY [LARGE SCALE ANALYSIS]</scope>
</reference>
<reference key="13">
    <citation type="journal article" date="2009" name="Science">
        <title>Lysine acetylation targets protein complexes and co-regulates major cellular functions.</title>
        <authorList>
            <person name="Choudhary C."/>
            <person name="Kumar C."/>
            <person name="Gnad F."/>
            <person name="Nielsen M.L."/>
            <person name="Rehman M."/>
            <person name="Walther T.C."/>
            <person name="Olsen J.V."/>
            <person name="Mann M."/>
        </authorList>
    </citation>
    <scope>ACETYLATION [LARGE SCALE ANALYSIS] AT LYS-35</scope>
    <scope>IDENTIFICATION BY MASS SPECTROMETRY [LARGE SCALE ANALYSIS]</scope>
</reference>
<reference key="14">
    <citation type="journal article" date="2010" name="Sci. Signal.">
        <title>Quantitative phosphoproteomics reveals widespread full phosphorylation site occupancy during mitosis.</title>
        <authorList>
            <person name="Olsen J.V."/>
            <person name="Vermeulen M."/>
            <person name="Santamaria A."/>
            <person name="Kumar C."/>
            <person name="Miller M.L."/>
            <person name="Jensen L.J."/>
            <person name="Gnad F."/>
            <person name="Cox J."/>
            <person name="Jensen T.S."/>
            <person name="Nigg E.A."/>
            <person name="Brunak S."/>
            <person name="Mann M."/>
        </authorList>
    </citation>
    <scope>ACETYLATION [LARGE SCALE ANALYSIS] AT ALA-2</scope>
    <scope>PHOSPHORYLATION [LARGE SCALE ANALYSIS] AT THR-171 AND SER-426</scope>
    <scope>CLEAVAGE OF INITIATOR METHIONINE [LARGE SCALE ANALYSIS]</scope>
    <scope>IDENTIFICATION BY MASS SPECTROMETRY [LARGE SCALE ANALYSIS]</scope>
    <source>
        <tissue>Cervix carcinoma</tissue>
    </source>
</reference>
<reference key="15">
    <citation type="journal article" date="2011" name="BMC Syst. Biol.">
        <title>Initial characterization of the human central proteome.</title>
        <authorList>
            <person name="Burkard T.R."/>
            <person name="Planyavsky M."/>
            <person name="Kaupe I."/>
            <person name="Breitwieser F.P."/>
            <person name="Buerckstuemmer T."/>
            <person name="Bennett K.L."/>
            <person name="Superti-Furga G."/>
            <person name="Colinge J."/>
        </authorList>
    </citation>
    <scope>IDENTIFICATION BY MASS SPECTROMETRY [LARGE SCALE ANALYSIS]</scope>
</reference>
<reference key="16">
    <citation type="journal article" date="2011" name="J. Biol. Chem.">
        <title>Interferon-induced antiviral protein MxA interacts with the cellular RNA helicases UAP56 and URH49.</title>
        <authorList>
            <person name="Wisskirchen C."/>
            <person name="Ludersdorfer T.H."/>
            <person name="Mueller D.A."/>
            <person name="Moritz E."/>
            <person name="Pavlovic J."/>
        </authorList>
    </citation>
    <scope>SUBCELLULAR LOCATION</scope>
    <scope>INTERACTION WITH MX1</scope>
</reference>
<reference key="17">
    <citation type="journal article" date="2012" name="Mol. Cell. Proteomics">
        <title>Comparative large-scale characterisation of plant vs. mammal proteins reveals similar and idiosyncratic N-alpha acetylation features.</title>
        <authorList>
            <person name="Bienvenut W.V."/>
            <person name="Sumpton D."/>
            <person name="Martinez A."/>
            <person name="Lilla S."/>
            <person name="Espagne C."/>
            <person name="Meinnel T."/>
            <person name="Giglione C."/>
        </authorList>
    </citation>
    <scope>ACETYLATION [LARGE SCALE ANALYSIS] AT ALA-2</scope>
    <scope>CLEAVAGE OF INITIATOR METHIONINE [LARGE SCALE ANALYSIS]</scope>
    <scope>IDENTIFICATION BY MASS SPECTROMETRY [LARGE SCALE ANALYSIS]</scope>
</reference>
<reference key="18">
    <citation type="journal article" date="2013" name="J. Proteome Res.">
        <title>Toward a comprehensive characterization of a human cancer cell phosphoproteome.</title>
        <authorList>
            <person name="Zhou H."/>
            <person name="Di Palma S."/>
            <person name="Preisinger C."/>
            <person name="Peng M."/>
            <person name="Polat A.N."/>
            <person name="Heck A.J."/>
            <person name="Mohammed S."/>
        </authorList>
    </citation>
    <scope>PHOSPHORYLATION [LARGE SCALE ANALYSIS] AT SER-37 AND THR-171</scope>
    <scope>IDENTIFICATION BY MASS SPECTROMETRY [LARGE SCALE ANALYSIS]</scope>
    <source>
        <tissue>Cervix carcinoma</tissue>
        <tissue>Erythroleukemia</tissue>
    </source>
</reference>
<reference key="19">
    <citation type="journal article" date="2013" name="Nat. Commun.">
        <title>GANP regulates recruitment of AID to immunoglobulin variable regions by modulating transcription and nucleosome occupancy.</title>
        <authorList>
            <person name="Singh S.K."/>
            <person name="Maeda K."/>
            <person name="Eid M.M."/>
            <person name="Almofty S.A."/>
            <person name="Ono M."/>
            <person name="Pham P."/>
            <person name="Goodman M.F."/>
            <person name="Sakaguchi N."/>
        </authorList>
    </citation>
    <scope>INTERACTION WITH MCM3AP</scope>
</reference>
<reference key="20">
    <citation type="journal article" date="2014" name="Nat. Struct. Mol. Biol.">
        <title>Uncovering global SUMOylation signaling networks in a site-specific manner.</title>
        <authorList>
            <person name="Hendriks I.A."/>
            <person name="D'Souza R.C."/>
            <person name="Yang B."/>
            <person name="Verlaan-de Vries M."/>
            <person name="Mann M."/>
            <person name="Vertegaal A.C."/>
        </authorList>
    </citation>
    <scope>SUMOYLATION [LARGE SCALE ANALYSIS] AT LYS-35</scope>
    <scope>IDENTIFICATION BY MASS SPECTROMETRY [LARGE SCALE ANALYSIS]</scope>
</reference>
<reference key="21">
    <citation type="journal article" date="2017" name="Nat. Struct. Mol. Biol.">
        <title>Site-specific mapping of the human SUMO proteome reveals co-modification with phosphorylation.</title>
        <authorList>
            <person name="Hendriks I.A."/>
            <person name="Lyon D."/>
            <person name="Young C."/>
            <person name="Jensen L.J."/>
            <person name="Vertegaal A.C."/>
            <person name="Nielsen M.L."/>
        </authorList>
    </citation>
    <scope>SUMOYLATION [LARGE SCALE ANALYSIS] AT LYS-31; LYS-35; LYS-154; LYS-162; LYS-240 AND LYS-255</scope>
    <scope>IDENTIFICATION BY MASS SPECTROMETRY [LARGE SCALE ANALYSIS]</scope>
</reference>
<reference key="22">
    <citation type="journal article" date="2020" name="J. Immunol.">
        <title>SUMOylation of DDX39A Alters Binding and Export of Antiviral Transcripts to Control Innate Immunity.</title>
        <authorList>
            <person name="Shi P."/>
            <person name="Guo Y."/>
            <person name="Su Y."/>
            <person name="Zhu M."/>
            <person name="Fu Y."/>
            <person name="Chi H."/>
            <person name="Wu J."/>
            <person name="Huang J."/>
        </authorList>
    </citation>
    <scope>FUNCTION</scope>
    <scope>SUMOYLATION BY RANBP2</scope>
    <scope>SUBCELLULAR LOCATION</scope>
</reference>
<reference key="23">
    <citation type="journal article" date="2021" name="Mol. Cell. Biol.">
        <title>The Mammalian Ecdysoneless Protein Interacts with RNA Helicase DDX39A To Regulate Nuclear mRNA Export.</title>
        <authorList>
            <person name="Saleem I."/>
            <person name="Mirza S."/>
            <person name="Sarkar A."/>
            <person name="Raza M."/>
            <person name="Mohapatra B."/>
            <person name="Mushtaq I."/>
            <person name="Kim J.H."/>
            <person name="Mishra N.K."/>
            <person name="Alsaleem M.A."/>
            <person name="Rakha E.A."/>
            <person name="Qiu F."/>
            <person name="Guda C."/>
            <person name="Band H."/>
            <person name="Band V."/>
        </authorList>
    </citation>
    <scope>FUNCTION</scope>
    <scope>INTERACTION WITH ECD</scope>
    <scope>SUBCELLULAR LOCATION</scope>
</reference>
<reference key="24">
    <citation type="journal article" date="2023" name="Mol. Cell">
        <title>The RNA helicase DDX39A binds a conserved structure in chikungunya virus RNA to control infection.</title>
        <authorList>
            <person name="Tapescu I."/>
            <person name="Taschuk F."/>
            <person name="Pokharel S.M."/>
            <person name="Zginnyk O."/>
            <person name="Ferretti M."/>
            <person name="Bailer P.F."/>
            <person name="Whig K."/>
            <person name="Madden E.A."/>
            <person name="Heise M.T."/>
            <person name="Schultz D.C."/>
            <person name="Cherry S."/>
        </authorList>
    </citation>
    <scope>FUNCTION</scope>
    <scope>SUBCELLULAR LOCATION</scope>
</reference>
<reference key="25">
    <citation type="journal article" date="2024" name="Nucleic Acids Res.">
        <title>The RNA helicase DDX39 contributes to the nuclear export of spliceosomal U snRNA by loading of PHAX onto RNA.</title>
        <authorList>
            <person name="Taniguchi I."/>
            <person name="Hirose T."/>
            <person name="Ohno M."/>
        </authorList>
    </citation>
    <scope>FUNCTION</scope>
    <scope>INTERACTION WITH PHAX</scope>
</reference>
<reference key="26">
    <citation type="journal article" date="2024" name="Nucleic Acids Res.">
        <title>Parsing the roles of DExD-box proteins DDX39A and DDX39B in alternative RNA splicing.</title>
        <authorList>
            <person name="Banerjee S."/>
            <person name="Nagasawa C.K."/>
            <person name="Widen S.G."/>
            <person name="Garcia-Blanco M.A."/>
        </authorList>
    </citation>
    <scope>FUNCTION</scope>
</reference>
<reference evidence="20" key="27">
    <citation type="journal article" date="2024" name="Nat. Commun.">
        <title>Structural differences between the closely related RNA helicases, UAP56 and URH49, fashion distinct functional apo-complexes.</title>
        <authorList>
            <person name="Fujita K.I."/>
            <person name="Ito M."/>
            <person name="Irie M."/>
            <person name="Harada K."/>
            <person name="Fujiwara N."/>
            <person name="Ikeda Y."/>
            <person name="Yoshioka H."/>
            <person name="Yamazaki T."/>
            <person name="Kojima M."/>
            <person name="Mikami B."/>
            <person name="Mayeda A."/>
            <person name="Masuda S."/>
        </authorList>
    </citation>
    <scope>X-RAY CRYSTALLOGRAPHY (1.82 ANGSTROMS) OF 42-427</scope>
    <scope>MUTAGENESIS OF CYS-223</scope>
    <scope>SUBCELLULAR LOCATION</scope>
    <scope>INTERACTION WITH APO-AREX COMPLEX COMPONENT SARNP</scope>
</reference>
<feature type="initiator methionine" description="Removed" evidence="21 23 24">
    <location>
        <position position="1"/>
    </location>
</feature>
<feature type="chain" id="PRO_0000055067" description="ATP-dependent RNA helicase DDX39A">
    <location>
        <begin position="2"/>
        <end position="427"/>
    </location>
</feature>
<feature type="domain" description="Helicase ATP-binding" evidence="1">
    <location>
        <begin position="75"/>
        <end position="248"/>
    </location>
</feature>
<feature type="domain" description="Helicase C-terminal" evidence="2">
    <location>
        <begin position="260"/>
        <end position="421"/>
    </location>
</feature>
<feature type="region of interest" description="Disordered" evidence="3">
    <location>
        <begin position="1"/>
        <end position="34"/>
    </location>
</feature>
<feature type="short sequence motif" description="Q motif">
    <location>
        <begin position="44"/>
        <end position="72"/>
    </location>
</feature>
<feature type="short sequence motif" description="DECD box">
    <location>
        <begin position="195"/>
        <end position="198"/>
    </location>
</feature>
<feature type="compositionally biased region" description="Acidic residues" evidence="3">
    <location>
        <begin position="1"/>
        <end position="19"/>
    </location>
</feature>
<feature type="binding site" evidence="1">
    <location>
        <begin position="88"/>
        <end position="95"/>
    </location>
    <ligand>
        <name>ATP</name>
        <dbReference type="ChEBI" id="CHEBI:30616"/>
    </ligand>
</feature>
<feature type="modified residue" description="N-acetylalanine" evidence="21 23 24">
    <location>
        <position position="2"/>
    </location>
</feature>
<feature type="modified residue" description="N6-acetyllysine; alternate" evidence="22">
    <location>
        <position position="35"/>
    </location>
</feature>
<feature type="modified residue" description="Phosphoserine" evidence="25">
    <location>
        <position position="37"/>
    </location>
</feature>
<feature type="modified residue" description="Phosphothreonine" evidence="23 25">
    <location>
        <position position="171"/>
    </location>
</feature>
<feature type="modified residue" description="Phosphoserine" evidence="23">
    <location>
        <position position="426"/>
    </location>
</feature>
<feature type="cross-link" description="Glycyl lysine isopeptide (Lys-Gly) (interchain with G-Cter in SUMO2)" evidence="27">
    <location>
        <position position="31"/>
    </location>
</feature>
<feature type="cross-link" description="Glycyl lysine isopeptide (Lys-Gly) (interchain with G-Cter in SUMO2); alternate" evidence="26 27">
    <location>
        <position position="35"/>
    </location>
</feature>
<feature type="cross-link" description="Glycyl lysine isopeptide (Lys-Gly) (interchain with G-Cter in SUMO2)" evidence="27">
    <location>
        <position position="154"/>
    </location>
</feature>
<feature type="cross-link" description="Glycyl lysine isopeptide (Lys-Gly) (interchain with G-Cter in SUMO2)" evidence="27">
    <location>
        <position position="162"/>
    </location>
</feature>
<feature type="cross-link" description="Glycyl lysine isopeptide (Lys-Gly) (interchain with G-Cter in SUMO2)" evidence="27">
    <location>
        <position position="240"/>
    </location>
</feature>
<feature type="cross-link" description="Glycyl lysine isopeptide (Lys-Gly) (interchain with G-Cter in SUMO2)" evidence="27">
    <location>
        <position position="255"/>
    </location>
</feature>
<feature type="splice variant" id="VSP_057426" description="In isoform 3." evidence="18">
    <original>PMEVFVDDETKLTLHGLQQYYVK</original>
    <variation>VLWEVSHKGVAHWKVLGRRDAQR</variation>
    <location>
        <begin position="245"/>
        <end position="267"/>
    </location>
</feature>
<feature type="splice variant" id="VSP_057427" description="In isoform 3." evidence="18">
    <location>
        <begin position="268"/>
        <end position="427"/>
    </location>
</feature>
<feature type="splice variant" id="VSP_046559" description="In isoform 2." evidence="17">
    <original>VIIFVKSVQRCMALAQLLVEQNFPAIAIHRGMAQ</original>
    <variation>PVTLSAVQGFPAADPGGHQSVWPGDGHRASQHRL</variation>
    <location>
        <begin position="289"/>
        <end position="322"/>
    </location>
</feature>
<feature type="splice variant" id="VSP_046560" description="In isoform 2." evidence="17">
    <location>
        <begin position="323"/>
        <end position="427"/>
    </location>
</feature>
<feature type="sequence variant" id="VAR_052166" description="In dbSNP:rs36127505.">
    <original>V</original>
    <variation>I</variation>
    <location>
        <position position="142"/>
    </location>
</feature>
<feature type="mutagenesis site" description="Exhibits a switch in complex formation from the apo-AREX complex to the apo-TREX complex." evidence="14">
    <original>C</original>
    <variation>S</variation>
    <location>
        <position position="223"/>
    </location>
</feature>
<feature type="sequence conflict" description="In Ref. 3; BAB15509." evidence="19" ref="3">
    <original>Y</original>
    <variation>H</variation>
    <location>
        <position position="38"/>
    </location>
</feature>
<feature type="sequence conflict" description="In Ref. 1; AAB50231." evidence="19" ref="1">
    <original>F</original>
    <variation>L</variation>
    <location>
        <position position="64"/>
    </location>
</feature>
<feature type="sequence conflict" description="In Ref. 1; AAB50231." evidence="19" ref="1">
    <original>L</original>
    <variation>M</variation>
    <location>
        <position position="160"/>
    </location>
</feature>
<feature type="sequence conflict" description="In Ref. 1; AAB50231." evidence="19" ref="1">
    <original>A</original>
    <variation>G</variation>
    <location>
        <position position="377"/>
    </location>
</feature>
<feature type="sequence conflict" description="In Ref. 1; AAB50231." evidence="19" ref="1">
    <original>D</original>
    <variation>H</variation>
    <location>
        <position position="401"/>
    </location>
</feature>
<feature type="sequence conflict" description="In Ref. 1; AAB50231." evidence="19" ref="1">
    <original>F</original>
    <variation>C</variation>
    <location>
        <position position="406"/>
    </location>
</feature>
<evidence type="ECO:0000255" key="1">
    <source>
        <dbReference type="PROSITE-ProRule" id="PRU00541"/>
    </source>
</evidence>
<evidence type="ECO:0000255" key="2">
    <source>
        <dbReference type="PROSITE-ProRule" id="PRU00542"/>
    </source>
</evidence>
<evidence type="ECO:0000256" key="3">
    <source>
        <dbReference type="SAM" id="MobiDB-lite"/>
    </source>
</evidence>
<evidence type="ECO:0000269" key="4">
    <source>
    </source>
</evidence>
<evidence type="ECO:0000269" key="5">
    <source>
    </source>
</evidence>
<evidence type="ECO:0000269" key="6">
    <source>
    </source>
</evidence>
<evidence type="ECO:0000269" key="7">
    <source>
    </source>
</evidence>
<evidence type="ECO:0000269" key="8">
    <source>
    </source>
</evidence>
<evidence type="ECO:0000269" key="9">
    <source>
    </source>
</evidence>
<evidence type="ECO:0000269" key="10">
    <source>
    </source>
</evidence>
<evidence type="ECO:0000269" key="11">
    <source>
    </source>
</evidence>
<evidence type="ECO:0000269" key="12">
    <source>
    </source>
</evidence>
<evidence type="ECO:0000269" key="13">
    <source>
    </source>
</evidence>
<evidence type="ECO:0000269" key="14">
    <source>
    </source>
</evidence>
<evidence type="ECO:0000269" key="15">
    <source>
    </source>
</evidence>
<evidence type="ECO:0000269" key="16">
    <source>
    </source>
</evidence>
<evidence type="ECO:0000303" key="17">
    <source>
    </source>
</evidence>
<evidence type="ECO:0000303" key="18">
    <source>
    </source>
</evidence>
<evidence type="ECO:0000305" key="19"/>
<evidence type="ECO:0007744" key="20">
    <source>
        <dbReference type="PDB" id="8IJU"/>
    </source>
</evidence>
<evidence type="ECO:0007744" key="21">
    <source>
    </source>
</evidence>
<evidence type="ECO:0007744" key="22">
    <source>
    </source>
</evidence>
<evidence type="ECO:0007744" key="23">
    <source>
    </source>
</evidence>
<evidence type="ECO:0007744" key="24">
    <source>
    </source>
</evidence>
<evidence type="ECO:0007744" key="25">
    <source>
    </source>
</evidence>
<evidence type="ECO:0007744" key="26">
    <source>
    </source>
</evidence>
<evidence type="ECO:0007744" key="27">
    <source>
    </source>
</evidence>
<name>DX39A_HUMAN</name>
<protein>
    <recommendedName>
        <fullName>ATP-dependent RNA helicase DDX39A</fullName>
        <ecNumber>3.6.4.13</ecNumber>
    </recommendedName>
    <alternativeName>
        <fullName>DEAD box protein 39</fullName>
    </alternativeName>
    <alternativeName>
        <fullName>Nuclear RNA helicase URH49</fullName>
    </alternativeName>
</protein>
<accession>O00148</accession>
<accession>B1Q2N1</accession>
<accession>Q8N5M0</accession>
<accession>Q9BVP6</accession>
<accession>Q9H5W0</accession>
<comment type="function">
    <text evidence="5 8 11 12 13 15">Helicase that plays an essential role in mRNA export and is involved in multiple steps in RNA metabolism including alternative splicing (PubMed:33941617, PubMed:38801080). Regulates nuclear mRNA export to the cytoplasm through association with ECD (PubMed:33941617). Also involved in spliceosomal uridine-rich small nuclear RNA (U snRNA) export by stimulating the RNA binding of adapter PHAX (PubMed:39011894). Plays a role in the negative regulation of type I IFN production by increasing the nuclear retention of antiviral transcripts and thus reducing their protein expression (PubMed:32393512). Independently of the interferon pathway, plays an antiviral role against alphaviruses by binding to a 5' conserved sequence element in the viral genomic RNA (PubMed:37949067).</text>
</comment>
<comment type="catalytic activity">
    <reaction>
        <text>ATP + H2O = ADP + phosphate + H(+)</text>
        <dbReference type="Rhea" id="RHEA:13065"/>
        <dbReference type="ChEBI" id="CHEBI:15377"/>
        <dbReference type="ChEBI" id="CHEBI:15378"/>
        <dbReference type="ChEBI" id="CHEBI:30616"/>
        <dbReference type="ChEBI" id="CHEBI:43474"/>
        <dbReference type="ChEBI" id="CHEBI:456216"/>
        <dbReference type="EC" id="3.6.4.13"/>
    </reaction>
</comment>
<comment type="subunit">
    <text evidence="4 5 7 9 10 12 14 16">Binds ALYREF/THOC4 and DDX39B/BAT1 (PubMed:14667819, PubMed:15047853). Interacts with the apo-AREX complex component SARNP (PubMed:17196963, PubMed:38225262). Interacts with MX1 (PubMed:21859714). Interacts with MCM3AP isoform GANP (PubMed:23652018). Interacts with ECD (PubMed:33941617). Interacts with PHAX; this interaction stimulates PHAX RNA binding activity (PubMed:39011894).</text>
</comment>
<comment type="subunit">
    <text evidence="6">(Microbial infection) Interacts with human cytomegalovirus/HHV-5 protein UL69.</text>
</comment>
<comment type="interaction">
    <interactant intactId="EBI-348253">
        <id>O00148</id>
    </interactant>
    <interactant intactId="EBI-11984237">
        <id>Q9Y3Y2-3</id>
        <label>CHTOP</label>
    </interactant>
    <organismsDiffer>false</organismsDiffer>
    <experiments>3</experiments>
</comment>
<comment type="interaction">
    <interactant intactId="EBI-348253">
        <id>O00148</id>
    </interactant>
    <interactant intactId="EBI-348253">
        <id>O00148</id>
        <label>DDX39A</label>
    </interactant>
    <organismsDiffer>false</organismsDiffer>
    <experiments>4</experiments>
</comment>
<comment type="interaction">
    <interactant intactId="EBI-348253">
        <id>O00148</id>
    </interactant>
    <interactant intactId="EBI-348622">
        <id>Q13838</id>
        <label>DDX39B</label>
    </interactant>
    <organismsDiffer>false</organismsDiffer>
    <experiments>6</experiments>
</comment>
<comment type="interaction">
    <interactant intactId="EBI-348253">
        <id>O00148</id>
    </interactant>
    <interactant intactId="EBI-352682">
        <id>P04792</id>
        <label>HSPB1</label>
    </interactant>
    <organismsDiffer>false</organismsDiffer>
    <experiments>3</experiments>
</comment>
<comment type="interaction">
    <interactant intactId="EBI-348253">
        <id>O00148</id>
    </interactant>
    <interactant intactId="EBI-466029">
        <id>P42858</id>
        <label>HTT</label>
    </interactant>
    <organismsDiffer>false</organismsDiffer>
    <experiments>3</experiments>
</comment>
<comment type="interaction">
    <interactant intactId="EBI-348253">
        <id>O00148</id>
    </interactant>
    <interactant intactId="EBI-2340927">
        <id>P78317</id>
        <label>RNF4</label>
    </interactant>
    <organismsDiffer>false</organismsDiffer>
    <experiments>3</experiments>
</comment>
<comment type="interaction">
    <interactant intactId="EBI-348253">
        <id>O00148</id>
    </interactant>
    <interactant intactId="EBI-347495">
        <id>P82979</id>
        <label>SARNP</label>
    </interactant>
    <organismsDiffer>false</organismsDiffer>
    <experiments>6</experiments>
</comment>
<comment type="interaction">
    <interactant intactId="EBI-348253">
        <id>O00148</id>
    </interactant>
    <interactant intactId="EBI-711613">
        <id>P21673</id>
        <label>SAT1</label>
    </interactant>
    <organismsDiffer>false</organismsDiffer>
    <experiments>3</experiments>
</comment>
<comment type="interaction">
    <interactant intactId="EBI-348253">
        <id>O00148</id>
    </interactant>
    <interactant intactId="EBI-710997">
        <id>P54274</id>
        <label>TERF1</label>
    </interactant>
    <organismsDiffer>false</organismsDiffer>
    <experiments>2</experiments>
</comment>
<comment type="interaction">
    <interactant intactId="EBI-348253">
        <id>O00148</id>
    </interactant>
    <interactant intactId="EBI-10180829">
        <id>Q7KZS0</id>
        <label>UBE2I</label>
    </interactant>
    <organismsDiffer>false</organismsDiffer>
    <experiments>3</experiments>
</comment>
<comment type="interaction">
    <interactant intactId="EBI-348253">
        <id>O00148</id>
    </interactant>
    <interactant intactId="EBI-720609">
        <id>O76024</id>
        <label>WFS1</label>
    </interactant>
    <organismsDiffer>false</organismsDiffer>
    <experiments>3</experiments>
</comment>
<comment type="interaction">
    <interactant intactId="EBI-348253">
        <id>O00148</id>
    </interactant>
    <interactant intactId="EBI-6190012">
        <id>H0YHG0</id>
    </interactant>
    <organismsDiffer>false</organismsDiffer>
    <experiments>3</experiments>
</comment>
<comment type="subcellular location">
    <subcellularLocation>
        <location evidence="9 11 12 14">Nucleus</location>
    </subcellularLocation>
    <subcellularLocation>
        <location evidence="9 13">Cytoplasm</location>
    </subcellularLocation>
    <text evidence="9 13">Can translocate to the cytoplasm in the presence of MX1 (PubMed:21859714). Accumulates in the cytoplasm upon infection with chikungunya virus (PubMed:37949067).</text>
</comment>
<comment type="alternative products">
    <event type="alternative splicing"/>
    <isoform>
        <id>O00148-1</id>
        <name>1</name>
        <name>L</name>
        <sequence type="displayed"/>
    </isoform>
    <isoform>
        <id>O00148-2</id>
        <name>2</name>
        <name>S</name>
        <sequence type="described" ref="VSP_046559 VSP_046560"/>
    </isoform>
    <isoform>
        <id>O00148-3</id>
        <name>3</name>
        <name>SS</name>
        <sequence type="described" ref="VSP_057426 VSP_057427"/>
    </isoform>
</comment>
<comment type="tissue specificity">
    <text evidence="5">Detected in testis, and at lower levels in brain, kidney, lung, thymus, spleen and salivary gland.</text>
</comment>
<comment type="induction">
    <text evidence="5">Up-regulated in proliferating cells. Present at low levels in quiescent cells.</text>
</comment>
<comment type="PTM">
    <text evidence="11">SUMOylated by RANBP2; SUMOylation modification affects its ability to bind RNA.</text>
</comment>
<comment type="miscellaneous">
    <molecule>Isoform 2</molecule>
    <text evidence="19">Probably devoid of RNA helicase activity.</text>
</comment>
<comment type="miscellaneous">
    <molecule>Isoform 3</molecule>
    <text evidence="19">Probably devoid of RNA helicase activity.</text>
</comment>
<comment type="similarity">
    <text evidence="19">Belongs to the DEAD box helicase family. DECD subfamily.</text>
</comment>
<comment type="sequence caution" evidence="19">
    <conflict type="erroneous initiation">
        <sequence resource="EMBL-CDS" id="BAB15509"/>
    </conflict>
    <text>Extended N-terminus.</text>
</comment>